<accession>B5VK45</accession>
<reference key="1">
    <citation type="journal article" date="2008" name="FEMS Yeast Res.">
        <title>Comparative genome analysis of a Saccharomyces cerevisiae wine strain.</title>
        <authorList>
            <person name="Borneman A.R."/>
            <person name="Forgan A.H."/>
            <person name="Pretorius I.S."/>
            <person name="Chambers P.J."/>
        </authorList>
    </citation>
    <scope>NUCLEOTIDE SEQUENCE [LARGE SCALE GENOMIC DNA]</scope>
    <source>
        <strain>AWRI1631</strain>
    </source>
</reference>
<dbReference type="EC" id="2.7.7.-" evidence="2"/>
<dbReference type="EC" id="2.8.1.-" evidence="2"/>
<dbReference type="EMBL" id="ABSV01001118">
    <property type="protein sequence ID" value="EDZ71699.1"/>
    <property type="molecule type" value="Genomic_DNA"/>
</dbReference>
<dbReference type="SMR" id="B5VK45"/>
<dbReference type="UniPathway" id="UPA00988"/>
<dbReference type="Proteomes" id="UP000008988">
    <property type="component" value="Unassembled WGS sequence"/>
</dbReference>
<dbReference type="GO" id="GO:0005829">
    <property type="term" value="C:cytosol"/>
    <property type="evidence" value="ECO:0007669"/>
    <property type="project" value="InterPro"/>
</dbReference>
<dbReference type="GO" id="GO:0070566">
    <property type="term" value="F:adenylyltransferase activity"/>
    <property type="evidence" value="ECO:0007669"/>
    <property type="project" value="InterPro"/>
</dbReference>
<dbReference type="GO" id="GO:0005524">
    <property type="term" value="F:ATP binding"/>
    <property type="evidence" value="ECO:0007669"/>
    <property type="project" value="UniProtKB-KW"/>
</dbReference>
<dbReference type="GO" id="GO:0046872">
    <property type="term" value="F:metal ion binding"/>
    <property type="evidence" value="ECO:0007669"/>
    <property type="project" value="UniProtKB-KW"/>
</dbReference>
<dbReference type="GO" id="GO:0004792">
    <property type="term" value="F:thiosulfate-cyanide sulfurtransferase activity"/>
    <property type="evidence" value="ECO:0007669"/>
    <property type="project" value="TreeGrafter"/>
</dbReference>
<dbReference type="GO" id="GO:0042292">
    <property type="term" value="F:URM1 activating enzyme activity"/>
    <property type="evidence" value="ECO:0007669"/>
    <property type="project" value="TreeGrafter"/>
</dbReference>
<dbReference type="GO" id="GO:0032447">
    <property type="term" value="P:protein urmylation"/>
    <property type="evidence" value="ECO:0007669"/>
    <property type="project" value="UniProtKB-UniRule"/>
</dbReference>
<dbReference type="GO" id="GO:0002143">
    <property type="term" value="P:tRNA wobble position uridine thiolation"/>
    <property type="evidence" value="ECO:0007669"/>
    <property type="project" value="InterPro"/>
</dbReference>
<dbReference type="CDD" id="cd01526">
    <property type="entry name" value="RHOD_ThiF"/>
    <property type="match status" value="1"/>
</dbReference>
<dbReference type="CDD" id="cd00757">
    <property type="entry name" value="ThiF_MoeB_HesA_family"/>
    <property type="match status" value="1"/>
</dbReference>
<dbReference type="FunFam" id="3.40.250.10:FF:000014">
    <property type="entry name" value="Adenylyltransferase and sulfurtransferase MOCS3"/>
    <property type="match status" value="1"/>
</dbReference>
<dbReference type="FunFam" id="3.40.50.720:FF:000033">
    <property type="entry name" value="Adenylyltransferase and sulfurtransferase MOCS3"/>
    <property type="match status" value="1"/>
</dbReference>
<dbReference type="Gene3D" id="3.40.50.720">
    <property type="entry name" value="NAD(P)-binding Rossmann-like Domain"/>
    <property type="match status" value="1"/>
</dbReference>
<dbReference type="Gene3D" id="3.40.250.10">
    <property type="entry name" value="Rhodanese-like domain"/>
    <property type="match status" value="1"/>
</dbReference>
<dbReference type="HAMAP" id="MF_03049">
    <property type="entry name" value="MOCS3_Uba4"/>
    <property type="match status" value="1"/>
</dbReference>
<dbReference type="InterPro" id="IPR028885">
    <property type="entry name" value="MOCS3/Uba4"/>
</dbReference>
<dbReference type="InterPro" id="IPR001763">
    <property type="entry name" value="Rhodanese-like_dom"/>
</dbReference>
<dbReference type="InterPro" id="IPR036873">
    <property type="entry name" value="Rhodanese-like_dom_sf"/>
</dbReference>
<dbReference type="InterPro" id="IPR045886">
    <property type="entry name" value="ThiF/MoeB/HesA"/>
</dbReference>
<dbReference type="InterPro" id="IPR000594">
    <property type="entry name" value="ThiF_NAD_FAD-bd"/>
</dbReference>
<dbReference type="InterPro" id="IPR035985">
    <property type="entry name" value="Ubiquitin-activating_enz"/>
</dbReference>
<dbReference type="PANTHER" id="PTHR10953:SF102">
    <property type="entry name" value="ADENYLYLTRANSFERASE AND SULFURTRANSFERASE MOCS3"/>
    <property type="match status" value="1"/>
</dbReference>
<dbReference type="PANTHER" id="PTHR10953">
    <property type="entry name" value="UBIQUITIN-ACTIVATING ENZYME E1"/>
    <property type="match status" value="1"/>
</dbReference>
<dbReference type="Pfam" id="PF00581">
    <property type="entry name" value="Rhodanese"/>
    <property type="match status" value="1"/>
</dbReference>
<dbReference type="Pfam" id="PF00899">
    <property type="entry name" value="ThiF"/>
    <property type="match status" value="1"/>
</dbReference>
<dbReference type="SMART" id="SM00450">
    <property type="entry name" value="RHOD"/>
    <property type="match status" value="1"/>
</dbReference>
<dbReference type="SUPFAM" id="SSF69572">
    <property type="entry name" value="Activating enzymes of the ubiquitin-like proteins"/>
    <property type="match status" value="1"/>
</dbReference>
<dbReference type="PROSITE" id="PS50206">
    <property type="entry name" value="RHODANESE_3"/>
    <property type="match status" value="1"/>
</dbReference>
<evidence type="ECO:0000250" key="1">
    <source>
        <dbReference type="UniProtKB" id="P38820"/>
    </source>
</evidence>
<evidence type="ECO:0000255" key="2">
    <source>
        <dbReference type="HAMAP-Rule" id="MF_03049"/>
    </source>
</evidence>
<keyword id="KW-0007">Acetylation</keyword>
<keyword id="KW-0067">ATP-binding</keyword>
<keyword id="KW-0963">Cytoplasm</keyword>
<keyword id="KW-0479">Metal-binding</keyword>
<keyword id="KW-0511">Multifunctional enzyme</keyword>
<keyword id="KW-0547">Nucleotide-binding</keyword>
<keyword id="KW-0548">Nucleotidyltransferase</keyword>
<keyword id="KW-0597">Phosphoprotein</keyword>
<keyword id="KW-0808">Transferase</keyword>
<keyword id="KW-0819">tRNA processing</keyword>
<keyword id="KW-0833">Ubl conjugation pathway</keyword>
<keyword id="KW-0862">Zinc</keyword>
<proteinExistence type="inferred from homology"/>
<name>UBA4_YEAS6</name>
<gene>
    <name evidence="2" type="primary">UBA4</name>
    <name type="synonym">NCS3</name>
    <name type="ORF">AWRI1631_81670</name>
</gene>
<feature type="chain" id="PRO_0000369237" description="Adenylyltransferase and sulfurtransferase UBA4">
    <location>
        <begin position="1"/>
        <end position="440"/>
    </location>
</feature>
<feature type="domain" description="Rhodanese" evidence="2">
    <location>
        <begin position="339"/>
        <end position="438"/>
    </location>
</feature>
<feature type="active site" description="Glycyl thioester intermediate; for adenylyltransferase activity" evidence="2">
    <location>
        <position position="225"/>
    </location>
</feature>
<feature type="active site" description="Cysteine persulfide intermediate; for sulfurtransferase activity" evidence="2">
    <location>
        <position position="397"/>
    </location>
</feature>
<feature type="binding site" evidence="2">
    <location>
        <position position="77"/>
    </location>
    <ligand>
        <name>ATP</name>
        <dbReference type="ChEBI" id="CHEBI:30616"/>
    </ligand>
</feature>
<feature type="binding site" evidence="2">
    <location>
        <position position="98"/>
    </location>
    <ligand>
        <name>ATP</name>
        <dbReference type="ChEBI" id="CHEBI:30616"/>
    </ligand>
</feature>
<feature type="binding site" evidence="2">
    <location>
        <begin position="105"/>
        <end position="109"/>
    </location>
    <ligand>
        <name>ATP</name>
        <dbReference type="ChEBI" id="CHEBI:30616"/>
    </ligand>
</feature>
<feature type="binding site" evidence="2">
    <location>
        <position position="122"/>
    </location>
    <ligand>
        <name>ATP</name>
        <dbReference type="ChEBI" id="CHEBI:30616"/>
    </ligand>
</feature>
<feature type="binding site" evidence="2">
    <location>
        <begin position="166"/>
        <end position="167"/>
    </location>
    <ligand>
        <name>ATP</name>
        <dbReference type="ChEBI" id="CHEBI:30616"/>
    </ligand>
</feature>
<feature type="binding site" evidence="2">
    <location>
        <position position="208"/>
    </location>
    <ligand>
        <name>Zn(2+)</name>
        <dbReference type="ChEBI" id="CHEBI:29105"/>
    </ligand>
</feature>
<feature type="binding site" evidence="2">
    <location>
        <position position="211"/>
    </location>
    <ligand>
        <name>Zn(2+)</name>
        <dbReference type="ChEBI" id="CHEBI:29105"/>
    </ligand>
</feature>
<feature type="binding site" evidence="2">
    <location>
        <position position="286"/>
    </location>
    <ligand>
        <name>Zn(2+)</name>
        <dbReference type="ChEBI" id="CHEBI:29105"/>
    </ligand>
</feature>
<feature type="binding site" evidence="2">
    <location>
        <position position="289"/>
    </location>
    <ligand>
        <name>Zn(2+)</name>
        <dbReference type="ChEBI" id="CHEBI:29105"/>
    </ligand>
</feature>
<feature type="modified residue" description="N-acetylmethionine" evidence="1">
    <location>
        <position position="1"/>
    </location>
</feature>
<feature type="modified residue" description="Phosphoserine" evidence="1">
    <location>
        <position position="326"/>
    </location>
</feature>
<protein>
    <recommendedName>
        <fullName evidence="2">Adenylyltransferase and sulfurtransferase UBA4</fullName>
    </recommendedName>
    <alternativeName>
        <fullName>Needs CLA4 to survive protein 3</fullName>
    </alternativeName>
    <alternativeName>
        <fullName evidence="2">Ubiquitin-like protein activator 4</fullName>
    </alternativeName>
    <domain>
        <recommendedName>
            <fullName evidence="2">Adenylyltransferase UBA4</fullName>
            <ecNumber evidence="2">2.7.7.-</ecNumber>
        </recommendedName>
    </domain>
    <domain>
        <recommendedName>
            <fullName evidence="2">Sulfurtransferase UBA4</fullName>
            <ecNumber evidence="2">2.8.1.-</ecNumber>
        </recommendedName>
    </domain>
</protein>
<sequence length="440" mass="49361">MNDYHLEDTTSELEALRLENAQLREQLAKREDSSRDYPLSLEEYQRYGRQMIVEETGGVAGQVKLKNTKVLVVGAGGLGCPALPYLAGAGVGQIGIVDNDVVETSNLHRQVLHDSSRVGMLKCESARQYITKLNPHINVVTYPVRLNSSNAFDIFKGYNYILDCTDSPLTRYLVSDVAVNLGITVVSASGLGTEGQLTILNFNNIGPCYRCFYPTPPPPNAVTSCQEGGVIGPCIGLVGTMMAVETLKLILGIYTNENFSPFLMLYSGFPQQSLRTFKMRGRQEKCLCCGKNRTITKEAIEKGEINYELFCGARNYNVCEPDERISVDAFQRIYKDDEFLAKHIFLDVRPSHHYEISHFPEAVNIPIKNLRDMNGDLKKLQEKLPSVEKDSNIVILCRYGNDSQLATRLLKDKFGFSNVRDVRGGYFKYIDDIDQTIPKY</sequence>
<organism>
    <name type="scientific">Saccharomyces cerevisiae (strain AWRI1631)</name>
    <name type="common">Baker's yeast</name>
    <dbReference type="NCBI Taxonomy" id="545124"/>
    <lineage>
        <taxon>Eukaryota</taxon>
        <taxon>Fungi</taxon>
        <taxon>Dikarya</taxon>
        <taxon>Ascomycota</taxon>
        <taxon>Saccharomycotina</taxon>
        <taxon>Saccharomycetes</taxon>
        <taxon>Saccharomycetales</taxon>
        <taxon>Saccharomycetaceae</taxon>
        <taxon>Saccharomyces</taxon>
    </lineage>
</organism>
<comment type="function">
    <text evidence="2">Plays a central role in 2-thiolation of mcm(5)S(2)U at tRNA wobble positions of cytosolic tRNA(Lys), tRNA(Glu) and tRNA(Gln). Acts by mediating the C-terminal thiocarboxylation of sulfur carrier URM1. Its N-terminus first activates URM1 as acyl-adenylate (-COAMP), then the persulfide sulfur on the catalytic cysteine is transferred to URM1 to form thiocarboxylation (-COSH) of its C-terminus. The reaction probably involves hydrogen sulfide that is generated from the persulfide intermediate and that acts as a nucleophile towards URM1. Subsequently, a transient disulfide bond is formed. Does not use thiosulfate as sulfur donor; NFS1 probably acting as a sulfur donor for thiocarboxylation reactions. Prior mcm(5) tRNA modification by the elongator complex is required for 2-thiolation. May also be involved in protein urmylation.</text>
</comment>
<comment type="cofactor">
    <cofactor evidence="2">
        <name>Zn(2+)</name>
        <dbReference type="ChEBI" id="CHEBI:29105"/>
    </cofactor>
    <text evidence="2">Binds 1 zinc ion per subunit.</text>
</comment>
<comment type="pathway">
    <text evidence="2">tRNA modification; 5-methoxycarbonylmethyl-2-thiouridine-tRNA biosynthesis.</text>
</comment>
<comment type="subcellular location">
    <subcellularLocation>
        <location evidence="1">Cytoplasm</location>
        <location evidence="1">Cytosol</location>
    </subcellularLocation>
</comment>
<comment type="similarity">
    <text evidence="2">In the N-terminal section; belongs to the HesA/MoeB/ThiF family. UBA4 subfamily.</text>
</comment>